<accession>D0MYB4</accession>
<comment type="function">
    <text evidence="1 5">Ribosome-dependent ATPase that functions in cytoplasmic translation elongation (PubMed:29300771). Required for the ATP-dependent release of deacylated tRNA from the ribosomal E-site during protein biosynthesis (By similarity). Stimulates the eEF1A-dependent binding of aminoacyl-tRNA to the ribosomal A-site, which has reduced affinity for tRNA as long as the E-site is occupied (By similarity). Assists translation termination by stimulating the release of nascent protein from the ribosome by release factors (By similarity).</text>
</comment>
<comment type="catalytic activity">
    <reaction evidence="5">
        <text>ATP + H2O = ADP + phosphate + H(+)</text>
        <dbReference type="Rhea" id="RHEA:13065"/>
        <dbReference type="ChEBI" id="CHEBI:15377"/>
        <dbReference type="ChEBI" id="CHEBI:15378"/>
        <dbReference type="ChEBI" id="CHEBI:30616"/>
        <dbReference type="ChEBI" id="CHEBI:43474"/>
        <dbReference type="ChEBI" id="CHEBI:456216"/>
    </reaction>
</comment>
<comment type="pathway">
    <text evidence="7">Protein biosynthesis; polypeptide chain elongation.</text>
</comment>
<comment type="subunit">
    <text evidence="1">Monomer.</text>
</comment>
<comment type="subcellular location">
    <subcellularLocation>
        <location evidence="1">Cytoplasm</location>
    </subcellularLocation>
</comment>
<comment type="similarity">
    <text evidence="7">Belongs to the ABC transporter superfamily. ABCF family. EF3 subfamily.</text>
</comment>
<name>EF3_PHYIT</name>
<feature type="chain" id="PRO_0000452345" description="Elongation factor 3">
    <location>
        <begin position="1"/>
        <end position="1038"/>
    </location>
</feature>
<feature type="repeat" description="HEAT 1" evidence="2">
    <location>
        <begin position="93"/>
        <end position="131"/>
    </location>
</feature>
<feature type="repeat" description="HEAT 2" evidence="2">
    <location>
        <begin position="133"/>
        <end position="170"/>
    </location>
</feature>
<feature type="repeat" description="HEAT 3" evidence="2">
    <location>
        <begin position="174"/>
        <end position="211"/>
    </location>
</feature>
<feature type="repeat" description="HEAT 4" evidence="2">
    <location>
        <begin position="213"/>
        <end position="249"/>
    </location>
</feature>
<feature type="repeat" description="HEAT 5" evidence="2">
    <location>
        <begin position="255"/>
        <end position="287"/>
    </location>
</feature>
<feature type="repeat" description="HEAT 6" evidence="2">
    <location>
        <begin position="292"/>
        <end position="331"/>
    </location>
</feature>
<feature type="domain" description="ABC transporter 1" evidence="3">
    <location>
        <begin position="426"/>
        <end position="654"/>
    </location>
</feature>
<feature type="domain" description="ABC transporter 2" evidence="3">
    <location>
        <begin position="680"/>
        <end position="995"/>
    </location>
</feature>
<feature type="region of interest" description="Disordered" evidence="4">
    <location>
        <begin position="1012"/>
        <end position="1038"/>
    </location>
</feature>
<feature type="compositionally biased region" description="Basic and acidic residues" evidence="4">
    <location>
        <begin position="1021"/>
        <end position="1031"/>
    </location>
</feature>
<feature type="binding site" evidence="1">
    <location>
        <position position="406"/>
    </location>
    <ligand>
        <name>ADP</name>
        <dbReference type="ChEBI" id="CHEBI:456216"/>
    </ligand>
</feature>
<feature type="binding site" evidence="1">
    <location>
        <position position="716"/>
    </location>
    <ligand>
        <name>ADP</name>
        <dbReference type="ChEBI" id="CHEBI:456216"/>
    </ligand>
</feature>
<feature type="binding site" evidence="1">
    <location>
        <position position="924"/>
    </location>
    <ligand>
        <name>ADP</name>
        <dbReference type="ChEBI" id="CHEBI:456216"/>
    </ligand>
</feature>
<feature type="binding site" evidence="1">
    <location>
        <position position="927"/>
    </location>
    <ligand>
        <name>ADP</name>
        <dbReference type="ChEBI" id="CHEBI:456216"/>
    </ligand>
</feature>
<feature type="binding site" evidence="1">
    <location>
        <position position="953"/>
    </location>
    <ligand>
        <name>ADP</name>
        <dbReference type="ChEBI" id="CHEBI:456216"/>
    </ligand>
</feature>
<keyword id="KW-0067">ATP-binding</keyword>
<keyword id="KW-0963">Cytoplasm</keyword>
<keyword id="KW-0251">Elongation factor</keyword>
<keyword id="KW-0378">Hydrolase</keyword>
<keyword id="KW-0547">Nucleotide-binding</keyword>
<keyword id="KW-0648">Protein biosynthesis</keyword>
<keyword id="KW-1185">Reference proteome</keyword>
<keyword id="KW-0677">Repeat</keyword>
<keyword id="KW-0694">RNA-binding</keyword>
<dbReference type="EC" id="3.6.4.-" evidence="5"/>
<dbReference type="EMBL" id="DS028121">
    <property type="protein sequence ID" value="EEY66162.1"/>
    <property type="molecule type" value="Genomic_DNA"/>
</dbReference>
<dbReference type="RefSeq" id="XP_002906761.1">
    <property type="nucleotide sequence ID" value="XM_002906715.1"/>
</dbReference>
<dbReference type="SMR" id="D0MYB4"/>
<dbReference type="STRING" id="403677.D0MYB4"/>
<dbReference type="EnsemblProtists" id="PITG_03712T0">
    <property type="protein sequence ID" value="PITG_03712T0"/>
    <property type="gene ID" value="PITG_03712"/>
</dbReference>
<dbReference type="GeneID" id="9467656"/>
<dbReference type="KEGG" id="pif:PITG_03712"/>
<dbReference type="VEuPathDB" id="FungiDB:PITG_03712"/>
<dbReference type="eggNOG" id="KOG0062">
    <property type="taxonomic scope" value="Eukaryota"/>
</dbReference>
<dbReference type="eggNOG" id="KOG1242">
    <property type="taxonomic scope" value="Eukaryota"/>
</dbReference>
<dbReference type="HOGENOM" id="CLU_002848_0_0_1"/>
<dbReference type="InParanoid" id="D0MYB4"/>
<dbReference type="OMA" id="VLSEAMW"/>
<dbReference type="OrthoDB" id="2110130at2759"/>
<dbReference type="UniPathway" id="UPA00345"/>
<dbReference type="Proteomes" id="UP000006643">
    <property type="component" value="Partially assembled WGS sequence"/>
</dbReference>
<dbReference type="GO" id="GO:0005737">
    <property type="term" value="C:cytoplasm"/>
    <property type="evidence" value="ECO:0000305"/>
    <property type="project" value="UniProtKB"/>
</dbReference>
<dbReference type="GO" id="GO:0005524">
    <property type="term" value="F:ATP binding"/>
    <property type="evidence" value="ECO:0007669"/>
    <property type="project" value="UniProtKB-KW"/>
</dbReference>
<dbReference type="GO" id="GO:0016887">
    <property type="term" value="F:ATP hydrolysis activity"/>
    <property type="evidence" value="ECO:0000314"/>
    <property type="project" value="UniProtKB"/>
</dbReference>
<dbReference type="GO" id="GO:0003723">
    <property type="term" value="F:RNA binding"/>
    <property type="evidence" value="ECO:0007669"/>
    <property type="project" value="UniProtKB-KW"/>
</dbReference>
<dbReference type="GO" id="GO:0003746">
    <property type="term" value="F:translation elongation factor activity"/>
    <property type="evidence" value="ECO:0000316"/>
    <property type="project" value="UniProtKB"/>
</dbReference>
<dbReference type="GO" id="GO:0002181">
    <property type="term" value="P:cytoplasmic translation"/>
    <property type="evidence" value="ECO:0000316"/>
    <property type="project" value="UniProtKB"/>
</dbReference>
<dbReference type="CDD" id="cd03221">
    <property type="entry name" value="ABCF_EF-3"/>
    <property type="match status" value="1"/>
</dbReference>
<dbReference type="CDD" id="cd18626">
    <property type="entry name" value="CD_eEF3"/>
    <property type="match status" value="1"/>
</dbReference>
<dbReference type="FunFam" id="1.25.10.10:FF:000076">
    <property type="entry name" value="Elongation factor 3"/>
    <property type="match status" value="1"/>
</dbReference>
<dbReference type="FunFam" id="2.40.50.990:FF:000002">
    <property type="entry name" value="mRNA export factor elf1"/>
    <property type="match status" value="1"/>
</dbReference>
<dbReference type="FunFam" id="3.40.50.300:FF:000193">
    <property type="entry name" value="Probable Elongation factor 3"/>
    <property type="match status" value="1"/>
</dbReference>
<dbReference type="Gene3D" id="2.40.50.990">
    <property type="match status" value="1"/>
</dbReference>
<dbReference type="Gene3D" id="1.25.10.10">
    <property type="entry name" value="Leucine-rich Repeat Variant"/>
    <property type="match status" value="1"/>
</dbReference>
<dbReference type="Gene3D" id="3.40.50.300">
    <property type="entry name" value="P-loop containing nucleotide triphosphate hydrolases"/>
    <property type="match status" value="2"/>
</dbReference>
<dbReference type="InterPro" id="IPR003593">
    <property type="entry name" value="AAA+_ATPase"/>
</dbReference>
<dbReference type="InterPro" id="IPR003439">
    <property type="entry name" value="ABC_transporter-like_ATP-bd"/>
</dbReference>
<dbReference type="InterPro" id="IPR017871">
    <property type="entry name" value="ABC_transporter-like_CS"/>
</dbReference>
<dbReference type="InterPro" id="IPR050611">
    <property type="entry name" value="ABCF_EF3_subfamily"/>
</dbReference>
<dbReference type="InterPro" id="IPR011989">
    <property type="entry name" value="ARM-like"/>
</dbReference>
<dbReference type="InterPro" id="IPR016024">
    <property type="entry name" value="ARM-type_fold"/>
</dbReference>
<dbReference type="InterPro" id="IPR016197">
    <property type="entry name" value="Chromo-like_dom_sf"/>
</dbReference>
<dbReference type="InterPro" id="IPR015688">
    <property type="entry name" value="eEF3_ABC2_chromodomain-like"/>
</dbReference>
<dbReference type="InterPro" id="IPR047038">
    <property type="entry name" value="eEF3_chromodomain-like_sf"/>
</dbReference>
<dbReference type="InterPro" id="IPR021133">
    <property type="entry name" value="HEAT_type_2"/>
</dbReference>
<dbReference type="InterPro" id="IPR027417">
    <property type="entry name" value="P-loop_NTPase"/>
</dbReference>
<dbReference type="InterPro" id="IPR034085">
    <property type="entry name" value="TOG"/>
</dbReference>
<dbReference type="PANTHER" id="PTHR19211">
    <property type="entry name" value="ATP-BINDING TRANSPORT PROTEIN-RELATED"/>
    <property type="match status" value="1"/>
</dbReference>
<dbReference type="PANTHER" id="PTHR19211:SF5">
    <property type="entry name" value="ELONGATION FACTOR 3A-RELATED"/>
    <property type="match status" value="1"/>
</dbReference>
<dbReference type="Pfam" id="PF00005">
    <property type="entry name" value="ABC_tran"/>
    <property type="match status" value="2"/>
</dbReference>
<dbReference type="Pfam" id="PF24984">
    <property type="entry name" value="HEAT_EF3_GNC1"/>
    <property type="match status" value="1"/>
</dbReference>
<dbReference type="Pfam" id="PF24987">
    <property type="entry name" value="HEAT_EF3_N"/>
    <property type="match status" value="1"/>
</dbReference>
<dbReference type="SMART" id="SM00382">
    <property type="entry name" value="AAA"/>
    <property type="match status" value="2"/>
</dbReference>
<dbReference type="SMART" id="SM01349">
    <property type="entry name" value="TOG"/>
    <property type="match status" value="1"/>
</dbReference>
<dbReference type="SUPFAM" id="SSF48371">
    <property type="entry name" value="ARM repeat"/>
    <property type="match status" value="1"/>
</dbReference>
<dbReference type="SUPFAM" id="SSF54160">
    <property type="entry name" value="Chromo domain-like"/>
    <property type="match status" value="1"/>
</dbReference>
<dbReference type="SUPFAM" id="SSF52540">
    <property type="entry name" value="P-loop containing nucleoside triphosphate hydrolases"/>
    <property type="match status" value="2"/>
</dbReference>
<dbReference type="PROSITE" id="PS00211">
    <property type="entry name" value="ABC_TRANSPORTER_1"/>
    <property type="match status" value="2"/>
</dbReference>
<dbReference type="PROSITE" id="PS50893">
    <property type="entry name" value="ABC_TRANSPORTER_2"/>
    <property type="match status" value="2"/>
</dbReference>
<dbReference type="PROSITE" id="PS50077">
    <property type="entry name" value="HEAT_REPEAT"/>
    <property type="match status" value="1"/>
</dbReference>
<gene>
    <name evidence="7" type="primary">TEF3</name>
    <name evidence="8" type="ORF">PITG_03712</name>
</gene>
<sequence length="1038" mass="115702">MAPYAPTDGISKLAIDQSKHFTEALKEALKSSADQQKVAAEKVSELVAGDANLNLGVVSQELRNALTGNDADAKVVAAHVVDDLMQKHAERVEAYLLPLLSVFLDLLGDKKPTVRPVAQEAALTIISSANKNSTIRILPILFDGLDRSKKWQTKKGALDLIAELSKVAPYQVGRCLPDIIPQVTDCMWDTRKEVKVAARDTMTKVCNVVGNMDIEPFIPALVSCLANPTEVPECTHKLASTTFVKTVEAPALAIMEPLLKRALAEGKTAVKRQAAVIIDNMCKLMDDPAEAQLFIPKLLPGLKKVIETQADPECREVATRAHETLFVAGGSMEVSEDELKVDYANIHKVVVESIAANPTAVKANIDSFVVDYVTGICYFLVVSRNFNKAVFEKEITTYIKAFMKPEEIKPLANEIRDRCFKENKSIFIEDVDCDEGIPDLCNCEFSLAYGGMILLNNARLRLKRGHRYGLCGPNGCGKSTLMRAISNGQLEGFPSRDELKTVFVEHNLQASEAELSVVDFILVDEDLKNTPRKEVEDTLAGVGFTAEMQAQGVGTLSGGWKMKLELARAMLQKADILLLDEPTNHLDVKNVAWLENYLTSLTNVTSIMVSHDSGFLDTVCTNIIHYETRKLKIYKGNLSKFVEQKPEAKAYYELESENVKFIFPEPGFLADIKNKGKPIIRLTNCSYQYPGTPKPSINNISVTCALSSRIAVLGPNGAGKSTLIKMLTGEVEPTSGQVWKHPSMRFAYVAQHAFHHIESHLDETANQYIQWRFQSGEDKELLAKETRKLSKEEKEHYKKPVNWEGEKRVLEEIVSRRKFKKSFEYELKWEKCPVDDNAWVPREKCEKWGWDKLLQIADDREAARANLQARPPTAIAVQKHLDCFGLGAEFGTHSRMRGLSGGQKVKVVLAAAMWLNPHILVLDEPTNYLDRDSLGALASAIKEFNGGVVMITHHNEFSSALTQETWNVEAGFLVIEGQQAEDKTKIEQKNEEEVTDAFGNVTKTKIKRKLTRKEKKAKDKARKEAEARGEYYSDSDEE</sequence>
<organism evidence="9">
    <name type="scientific">Phytophthora infestans (strain T30-4)</name>
    <name type="common">Potato late blight agent</name>
    <dbReference type="NCBI Taxonomy" id="403677"/>
    <lineage>
        <taxon>Eukaryota</taxon>
        <taxon>Sar</taxon>
        <taxon>Stramenopiles</taxon>
        <taxon>Oomycota</taxon>
        <taxon>Peronosporales</taxon>
        <taxon>Peronosporaceae</taxon>
        <taxon>Phytophthora</taxon>
    </lineage>
</organism>
<protein>
    <recommendedName>
        <fullName evidence="6">Elongation factor 3</fullName>
        <shortName evidence="7">EF-3</shortName>
        <ecNumber evidence="5">3.6.4.-</ecNumber>
    </recommendedName>
    <alternativeName>
        <fullName evidence="6">Eukaryotic elongation factor 3</fullName>
        <shortName evidence="6">eEF3</shortName>
    </alternativeName>
</protein>
<evidence type="ECO:0000250" key="1">
    <source>
        <dbReference type="UniProtKB" id="P16521"/>
    </source>
</evidence>
<evidence type="ECO:0000255" key="2"/>
<evidence type="ECO:0000255" key="3">
    <source>
        <dbReference type="PROSITE-ProRule" id="PRU00434"/>
    </source>
</evidence>
<evidence type="ECO:0000256" key="4">
    <source>
        <dbReference type="SAM" id="MobiDB-lite"/>
    </source>
</evidence>
<evidence type="ECO:0000269" key="5">
    <source>
    </source>
</evidence>
<evidence type="ECO:0000303" key="6">
    <source>
    </source>
</evidence>
<evidence type="ECO:0000305" key="7"/>
<evidence type="ECO:0000312" key="8">
    <source>
        <dbReference type="EMBL" id="EEY66162.1"/>
    </source>
</evidence>
<evidence type="ECO:0000312" key="9">
    <source>
        <dbReference type="Proteomes" id="UP000006643"/>
    </source>
</evidence>
<proteinExistence type="evidence at protein level"/>
<reference evidence="9" key="1">
    <citation type="journal article" date="2009" name="Nature">
        <title>Genome sequence and analysis of the Irish potato famine pathogen Phytophthora infestans.</title>
        <authorList>
            <consortium name="The Broad Institute Genome Sequencing Platform"/>
            <person name="Haas B.J."/>
            <person name="Kamoun S."/>
            <person name="Zody M.C."/>
            <person name="Jiang R.H."/>
            <person name="Handsaker R.E."/>
            <person name="Cano L.M."/>
            <person name="Grabherr M."/>
            <person name="Kodira C.D."/>
            <person name="Raffaele S."/>
            <person name="Torto-Alalibo T."/>
            <person name="Bozkurt T.O."/>
            <person name="Ah-Fong A.M."/>
            <person name="Alvarado L."/>
            <person name="Anderson V.L."/>
            <person name="Armstrong M.R."/>
            <person name="Avrova A."/>
            <person name="Baxter L."/>
            <person name="Beynon J."/>
            <person name="Boevink P.C."/>
            <person name="Bollmann S.R."/>
            <person name="Bos J.I."/>
            <person name="Bulone V."/>
            <person name="Cai G."/>
            <person name="Cakir C."/>
            <person name="Carrington J.C."/>
            <person name="Chawner M."/>
            <person name="Conti L."/>
            <person name="Costanzo S."/>
            <person name="Ewan R."/>
            <person name="Fahlgren N."/>
            <person name="Fischbach M.A."/>
            <person name="Fugelstad J."/>
            <person name="Gilroy E.M."/>
            <person name="Gnerre S."/>
            <person name="Green P.J."/>
            <person name="Grenville-Briggs L.J."/>
            <person name="Griffith J."/>
            <person name="Grunwald N.J."/>
            <person name="Horn K."/>
            <person name="Horner N.R."/>
            <person name="Hu C.H."/>
            <person name="Huitema E."/>
            <person name="Jeong D.H."/>
            <person name="Jones A.M."/>
            <person name="Jones J.D."/>
            <person name="Jones R.W."/>
            <person name="Karlsson E.K."/>
            <person name="Kunjeti S.G."/>
            <person name="Lamour K."/>
            <person name="Liu Z."/>
            <person name="Ma L."/>
            <person name="Maclean D."/>
            <person name="Chibucos M.C."/>
            <person name="McDonald H."/>
            <person name="McWalters J."/>
            <person name="Meijer H.J."/>
            <person name="Morgan W."/>
            <person name="Morris P.F."/>
            <person name="Munro C.A."/>
            <person name="O'Neill K."/>
            <person name="Ospina-Giraldo M."/>
            <person name="Pinzon A."/>
            <person name="Pritchard L."/>
            <person name="Ramsahoye B."/>
            <person name="Ren Q."/>
            <person name="Restrepo S."/>
            <person name="Roy S."/>
            <person name="Sadanandom A."/>
            <person name="Savidor A."/>
            <person name="Schornack S."/>
            <person name="Schwartz D.C."/>
            <person name="Schumann U.D."/>
            <person name="Schwessinger B."/>
            <person name="Seyer L."/>
            <person name="Sharpe T."/>
            <person name="Silvar C."/>
            <person name="Song J."/>
            <person name="Studholme D.J."/>
            <person name="Sykes S."/>
            <person name="Thines M."/>
            <person name="van de Vondervoort P.J."/>
            <person name="Phuntumart V."/>
            <person name="Wawra S."/>
            <person name="Weide R."/>
            <person name="Win J."/>
            <person name="Young C."/>
            <person name="Zhou S."/>
            <person name="Fry W."/>
            <person name="Meyers B.C."/>
            <person name="van West P."/>
            <person name="Ristaino J."/>
            <person name="Govers F."/>
            <person name="Birch P.R."/>
            <person name="Whisson S.C."/>
            <person name="Judelson H.S."/>
            <person name="Nusbaum C."/>
        </authorList>
    </citation>
    <scope>NUCLEOTIDE SEQUENCE [LARGE SCALE GENOMIC DNA]</scope>
    <source>
        <strain evidence="9">T30-4</strain>
    </source>
</reference>
<reference key="2">
    <citation type="journal article" date="2018" name="PLoS ONE">
        <title>Demonstration of translation elongation factor 3 activity from a non-fungal species, Phytophthora infestans.</title>
        <authorList>
            <person name="Mateyak M.K."/>
            <person name="Pupek J.K."/>
            <person name="Garino A.E."/>
            <person name="Knapp M.C."/>
            <person name="Colmer S.F."/>
            <person name="Kinzy T.G."/>
            <person name="Dunaway S."/>
        </authorList>
    </citation>
    <scope>FUNCTION</scope>
    <scope>CATALYTIC ACTIVITY</scope>
</reference>